<organism>
    <name type="scientific">Rhizobium etli (strain CIAT 652)</name>
    <dbReference type="NCBI Taxonomy" id="491916"/>
    <lineage>
        <taxon>Bacteria</taxon>
        <taxon>Pseudomonadati</taxon>
        <taxon>Pseudomonadota</taxon>
        <taxon>Alphaproteobacteria</taxon>
        <taxon>Hyphomicrobiales</taxon>
        <taxon>Rhizobiaceae</taxon>
        <taxon>Rhizobium/Agrobacterium group</taxon>
        <taxon>Rhizobium</taxon>
    </lineage>
</organism>
<name>Y4260_RHIE6</name>
<comment type="similarity">
    <text evidence="1">Belongs to the UPF0434 family.</text>
</comment>
<feature type="chain" id="PRO_1000138324" description="UPF0434 protein RHECIAT_CH0004260">
    <location>
        <begin position="1"/>
        <end position="62"/>
    </location>
</feature>
<reference key="1">
    <citation type="journal article" date="2010" name="Appl. Environ. Microbiol.">
        <title>Conserved symbiotic plasmid DNA sequences in the multireplicon pangenomic structure of Rhizobium etli.</title>
        <authorList>
            <person name="Gonzalez V."/>
            <person name="Acosta J.L."/>
            <person name="Santamaria R.I."/>
            <person name="Bustos P."/>
            <person name="Fernandez J.L."/>
            <person name="Hernandez Gonzalez I.L."/>
            <person name="Diaz R."/>
            <person name="Flores M."/>
            <person name="Palacios R."/>
            <person name="Mora J."/>
            <person name="Davila G."/>
        </authorList>
    </citation>
    <scope>NUCLEOTIDE SEQUENCE [LARGE SCALE GENOMIC DNA]</scope>
    <source>
        <strain>CIAT 652</strain>
    </source>
</reference>
<protein>
    <recommendedName>
        <fullName evidence="1">UPF0434 protein RHECIAT_CH0004260</fullName>
    </recommendedName>
</protein>
<proteinExistence type="inferred from homology"/>
<gene>
    <name type="ordered locus">RHECIAT_CH0004260</name>
</gene>
<evidence type="ECO:0000255" key="1">
    <source>
        <dbReference type="HAMAP-Rule" id="MF_01187"/>
    </source>
</evidence>
<dbReference type="EMBL" id="CP001074">
    <property type="protein sequence ID" value="ACE93189.1"/>
    <property type="molecule type" value="Genomic_DNA"/>
</dbReference>
<dbReference type="SMR" id="B3PR35"/>
<dbReference type="KEGG" id="rec:RHECIAT_CH0004260"/>
<dbReference type="eggNOG" id="COG2835">
    <property type="taxonomic scope" value="Bacteria"/>
</dbReference>
<dbReference type="HOGENOM" id="CLU_155659_2_2_5"/>
<dbReference type="Proteomes" id="UP000008817">
    <property type="component" value="Chromosome"/>
</dbReference>
<dbReference type="GO" id="GO:0005829">
    <property type="term" value="C:cytosol"/>
    <property type="evidence" value="ECO:0007669"/>
    <property type="project" value="TreeGrafter"/>
</dbReference>
<dbReference type="FunFam" id="2.20.25.10:FF:000002">
    <property type="entry name" value="UPF0434 protein YcaR"/>
    <property type="match status" value="1"/>
</dbReference>
<dbReference type="Gene3D" id="2.20.25.10">
    <property type="match status" value="1"/>
</dbReference>
<dbReference type="HAMAP" id="MF_01187">
    <property type="entry name" value="UPF0434"/>
    <property type="match status" value="1"/>
</dbReference>
<dbReference type="InterPro" id="IPR005651">
    <property type="entry name" value="Trm112-like"/>
</dbReference>
<dbReference type="PANTHER" id="PTHR33505:SF4">
    <property type="entry name" value="PROTEIN PREY, MITOCHONDRIAL"/>
    <property type="match status" value="1"/>
</dbReference>
<dbReference type="PANTHER" id="PTHR33505">
    <property type="entry name" value="ZGC:162634"/>
    <property type="match status" value="1"/>
</dbReference>
<dbReference type="Pfam" id="PF03966">
    <property type="entry name" value="Trm112p"/>
    <property type="match status" value="1"/>
</dbReference>
<dbReference type="SUPFAM" id="SSF158997">
    <property type="entry name" value="Trm112p-like"/>
    <property type="match status" value="1"/>
</dbReference>
<sequence length="62" mass="7178">MDEKLSRVDPKLLELLVCPLSKGRLSYDREHNELVSEKARLAYPIRDGIPIMLVSEARRLDE</sequence>
<accession>B3PR35</accession>